<proteinExistence type="evidence at transcript level"/>
<dbReference type="EC" id="3.2.1.39"/>
<dbReference type="EMBL" id="M80608">
    <property type="protein sequence ID" value="AAA03618.1"/>
    <property type="molecule type" value="mRNA"/>
</dbReference>
<dbReference type="PIR" id="S26241">
    <property type="entry name" value="S26241"/>
</dbReference>
<dbReference type="RefSeq" id="NP_001234805.1">
    <property type="nucleotide sequence ID" value="NM_001247876.2"/>
</dbReference>
<dbReference type="RefSeq" id="NP_001299819.1">
    <property type="nucleotide sequence ID" value="NM_001312890.1"/>
</dbReference>
<dbReference type="SMR" id="Q01413"/>
<dbReference type="FunCoup" id="Q01413">
    <property type="interactions" value="30"/>
</dbReference>
<dbReference type="STRING" id="4081.Q01413"/>
<dbReference type="Allergome" id="2549">
    <property type="allergen name" value="Sola l Glucanase"/>
</dbReference>
<dbReference type="CAZy" id="GH17">
    <property type="family name" value="Glycoside Hydrolase Family 17"/>
</dbReference>
<dbReference type="PaxDb" id="4081-Solyc01g059980.2.1"/>
<dbReference type="EnsemblPlants" id="Solyc01g059965.1.1">
    <property type="protein sequence ID" value="Solyc01g059965.1.1"/>
    <property type="gene ID" value="Solyc01g059965.1"/>
</dbReference>
<dbReference type="GeneID" id="101261650"/>
<dbReference type="GeneID" id="543987"/>
<dbReference type="Gramene" id="Solyc01g059965.1.1">
    <property type="protein sequence ID" value="Solyc01g059965.1.1"/>
    <property type="gene ID" value="Solyc01g059965.1"/>
</dbReference>
<dbReference type="KEGG" id="sly:101261650"/>
<dbReference type="KEGG" id="sly:543987"/>
<dbReference type="eggNOG" id="ENOG502QQ3M">
    <property type="taxonomic scope" value="Eukaryota"/>
</dbReference>
<dbReference type="HOGENOM" id="CLU_024953_0_0_1"/>
<dbReference type="InParanoid" id="Q01413"/>
<dbReference type="OMA" id="RENAREW"/>
<dbReference type="OrthoDB" id="941679at2759"/>
<dbReference type="PhylomeDB" id="Q01413"/>
<dbReference type="Proteomes" id="UP000004994">
    <property type="component" value="Chromosome 1"/>
</dbReference>
<dbReference type="GO" id="GO:0005773">
    <property type="term" value="C:vacuole"/>
    <property type="evidence" value="ECO:0007669"/>
    <property type="project" value="UniProtKB-SubCell"/>
</dbReference>
<dbReference type="GO" id="GO:0042973">
    <property type="term" value="F:glucan endo-1,3-beta-D-glucosidase activity"/>
    <property type="evidence" value="ECO:0007669"/>
    <property type="project" value="UniProtKB-EC"/>
</dbReference>
<dbReference type="GO" id="GO:0005975">
    <property type="term" value="P:carbohydrate metabolic process"/>
    <property type="evidence" value="ECO:0007669"/>
    <property type="project" value="InterPro"/>
</dbReference>
<dbReference type="GO" id="GO:0006952">
    <property type="term" value="P:defense response"/>
    <property type="evidence" value="ECO:0007669"/>
    <property type="project" value="UniProtKB-KW"/>
</dbReference>
<dbReference type="FunFam" id="3.20.20.80:FF:000010">
    <property type="entry name" value="glucan endo-1,3-beta-glucosidase, basic"/>
    <property type="match status" value="1"/>
</dbReference>
<dbReference type="Gene3D" id="3.20.20.80">
    <property type="entry name" value="Glycosidases"/>
    <property type="match status" value="1"/>
</dbReference>
<dbReference type="InterPro" id="IPR000490">
    <property type="entry name" value="Glyco_hydro_17"/>
</dbReference>
<dbReference type="InterPro" id="IPR044965">
    <property type="entry name" value="Glyco_hydro_17_plant"/>
</dbReference>
<dbReference type="InterPro" id="IPR017853">
    <property type="entry name" value="Glycoside_hydrolase_SF"/>
</dbReference>
<dbReference type="PANTHER" id="PTHR32227">
    <property type="entry name" value="GLUCAN ENDO-1,3-BETA-GLUCOSIDASE BG1-RELATED-RELATED"/>
    <property type="match status" value="1"/>
</dbReference>
<dbReference type="Pfam" id="PF00332">
    <property type="entry name" value="Glyco_hydro_17"/>
    <property type="match status" value="1"/>
</dbReference>
<dbReference type="SUPFAM" id="SSF51445">
    <property type="entry name" value="(Trans)glycosidases"/>
    <property type="match status" value="1"/>
</dbReference>
<dbReference type="PROSITE" id="PS00587">
    <property type="entry name" value="GLYCOSYL_HYDROL_F17"/>
    <property type="match status" value="1"/>
</dbReference>
<reference key="1">
    <citation type="journal article" date="1992" name="Plant Mol. Biol.">
        <title>Differential accumulation of mRNAs encoding extracellular and intracellular PR proteins in tomato induced by virulent and avirulent races of Cladosporium fulvum.</title>
        <authorList>
            <person name="van Kan J.A.L."/>
            <person name="Joosten M.H.A.J."/>
            <person name="Wagemakers C.A.M."/>
            <person name="van den Berg-Velthuis G.C.M."/>
            <person name="de Wit P.J.G.M."/>
        </authorList>
    </citation>
    <scope>NUCLEOTIDE SEQUENCE [MRNA]</scope>
    <source>
        <strain>cv. Moneymaker</strain>
        <tissue>Leaf</tissue>
    </source>
</reference>
<sequence>MATSQIAIIVLLGLLVATNIHITEAQIGVCYGMMGNNLPSHSEVIQLYKSRNIRRLRLYDPNHGALNALRGSNIEVILGLPNVDVKHISSGMEHARWWVQKNVRDFWPHVKIKYIAVGNEISPVTGTSNLAPFQVPALVNIYKAIGEAGLGNDIKVSTSVDMTLIGNSYPPSQGSFRNDVRWFTDPIVGFLRDTRAPLLVNIYPYFSYSGNPGQISLPYALFTAPNVVVQDGSRQYRNLFDAMLDSVYAAMDRTGGGSVGIVVSESGWPSAGAFGATHENAQTYLRNLIQHAKEGSPRKPGPIETYIFAMFDENNKNPELEKHFGMFSPNKQPKYNLNFGVSERVWDITNSTASSLTSEI</sequence>
<protein>
    <recommendedName>
        <fullName>Glucan endo-1,3-beta-glucosidase B</fullName>
        <ecNumber>3.2.1.39</ecNumber>
    </recommendedName>
    <alternativeName>
        <fullName>(1-&gt;3)-beta-glucan endohydrolase B</fullName>
        <shortName>(1-&gt;3)-beta-glucanase B</shortName>
    </alternativeName>
    <alternativeName>
        <fullName>Basic beta-1,3-glucanase</fullName>
    </alternativeName>
    <alternativeName>
        <fullName>Beta-1,3-endoglucanase B</fullName>
    </alternativeName>
</protein>
<comment type="function">
    <text>Implicated in the defense of plants against pathogens.</text>
</comment>
<comment type="catalytic activity">
    <reaction>
        <text>Hydrolysis of (1-&gt;3)-beta-D-glucosidic linkages in (1-&gt;3)-beta-D-glucans.</text>
        <dbReference type="EC" id="3.2.1.39"/>
    </reaction>
</comment>
<comment type="subcellular location">
    <subcellularLocation>
        <location evidence="5">Vacuole</location>
    </subcellularLocation>
</comment>
<comment type="developmental stage">
    <text>Maximum expression found during days 4 to 6 and days 4 to 14 after inoculation with an avirulent and a virulent pathogen respectively.</text>
</comment>
<comment type="induction">
    <text>Upon infection by virulent and avirulent races of pathogens, for example fungal pathogen C.fulvum.</text>
</comment>
<comment type="similarity">
    <text evidence="5">Belongs to the glycosyl hydrolase 17 family.</text>
</comment>
<name>E13B_SOLLC</name>
<organism>
    <name type="scientific">Solanum lycopersicum</name>
    <name type="common">Tomato</name>
    <name type="synonym">Lycopersicon esculentum</name>
    <dbReference type="NCBI Taxonomy" id="4081"/>
    <lineage>
        <taxon>Eukaryota</taxon>
        <taxon>Viridiplantae</taxon>
        <taxon>Streptophyta</taxon>
        <taxon>Embryophyta</taxon>
        <taxon>Tracheophyta</taxon>
        <taxon>Spermatophyta</taxon>
        <taxon>Magnoliopsida</taxon>
        <taxon>eudicotyledons</taxon>
        <taxon>Gunneridae</taxon>
        <taxon>Pentapetalae</taxon>
        <taxon>asterids</taxon>
        <taxon>lamiids</taxon>
        <taxon>Solanales</taxon>
        <taxon>Solanaceae</taxon>
        <taxon>Solanoideae</taxon>
        <taxon>Solaneae</taxon>
        <taxon>Solanum</taxon>
        <taxon>Solanum subgen. Lycopersicon</taxon>
    </lineage>
</organism>
<evidence type="ECO:0000250" key="1"/>
<evidence type="ECO:0000250" key="2">
    <source>
        <dbReference type="UniProtKB" id="O22317"/>
    </source>
</evidence>
<evidence type="ECO:0000250" key="3">
    <source>
        <dbReference type="UniProtKB" id="P15797"/>
    </source>
</evidence>
<evidence type="ECO:0000255" key="4"/>
<evidence type="ECO:0000305" key="5"/>
<feature type="signal peptide" evidence="1">
    <location>
        <begin position="1"/>
        <end position="25"/>
    </location>
</feature>
<feature type="chain" id="PRO_0000011852" description="Glucan endo-1,3-beta-glucosidase B">
    <location>
        <begin position="26"/>
        <end position="340"/>
    </location>
</feature>
<feature type="propeptide" id="PRO_0000011853" description="Removed in mature form" evidence="5">
    <location>
        <begin position="341"/>
        <end position="360"/>
    </location>
</feature>
<feature type="active site" description="Proton donor" evidence="2">
    <location>
        <position position="120"/>
    </location>
</feature>
<feature type="active site" description="Nucleophile" evidence="2">
    <location>
        <position position="265"/>
    </location>
</feature>
<feature type="modified residue" description="Pyrrolidone carboxylic acid" evidence="3">
    <location>
        <position position="26"/>
    </location>
</feature>
<feature type="glycosylation site" description="N-linked (GlcNAc...) asparagine" evidence="4">
    <location>
        <position position="350"/>
    </location>
</feature>
<keyword id="KW-0325">Glycoprotein</keyword>
<keyword id="KW-0326">Glycosidase</keyword>
<keyword id="KW-0378">Hydrolase</keyword>
<keyword id="KW-0611">Plant defense</keyword>
<keyword id="KW-0873">Pyrrolidone carboxylic acid</keyword>
<keyword id="KW-1185">Reference proteome</keyword>
<keyword id="KW-0732">Signal</keyword>
<keyword id="KW-0926">Vacuole</keyword>
<accession>Q01413</accession>